<organism>
    <name type="scientific">Staphylococcus aureus (strain MW2)</name>
    <dbReference type="NCBI Taxonomy" id="196620"/>
    <lineage>
        <taxon>Bacteria</taxon>
        <taxon>Bacillati</taxon>
        <taxon>Bacillota</taxon>
        <taxon>Bacilli</taxon>
        <taxon>Bacillales</taxon>
        <taxon>Staphylococcaceae</taxon>
        <taxon>Staphylococcus</taxon>
    </lineage>
</organism>
<proteinExistence type="inferred from homology"/>
<dbReference type="EC" id="3.5.2.9" evidence="1"/>
<dbReference type="EMBL" id="BA000033">
    <property type="protein sequence ID" value="BAB95420.1"/>
    <property type="molecule type" value="Genomic_DNA"/>
</dbReference>
<dbReference type="RefSeq" id="WP_001261797.1">
    <property type="nucleotide sequence ID" value="NC_003923.1"/>
</dbReference>
<dbReference type="SMR" id="Q8NW95"/>
<dbReference type="KEGG" id="sam:MW1555"/>
<dbReference type="HOGENOM" id="CLU_069535_0_0_9"/>
<dbReference type="GO" id="GO:0017168">
    <property type="term" value="F:5-oxoprolinase (ATP-hydrolyzing) activity"/>
    <property type="evidence" value="ECO:0007669"/>
    <property type="project" value="UniProtKB-UniRule"/>
</dbReference>
<dbReference type="GO" id="GO:0005524">
    <property type="term" value="F:ATP binding"/>
    <property type="evidence" value="ECO:0007669"/>
    <property type="project" value="UniProtKB-UniRule"/>
</dbReference>
<dbReference type="GO" id="GO:0005975">
    <property type="term" value="P:carbohydrate metabolic process"/>
    <property type="evidence" value="ECO:0007669"/>
    <property type="project" value="InterPro"/>
</dbReference>
<dbReference type="CDD" id="cd10787">
    <property type="entry name" value="LamB_YcsF_like"/>
    <property type="match status" value="1"/>
</dbReference>
<dbReference type="Gene3D" id="3.20.20.370">
    <property type="entry name" value="Glycoside hydrolase/deacetylase"/>
    <property type="match status" value="1"/>
</dbReference>
<dbReference type="HAMAP" id="MF_00691">
    <property type="entry name" value="PxpA"/>
    <property type="match status" value="1"/>
</dbReference>
<dbReference type="InterPro" id="IPR011330">
    <property type="entry name" value="Glyco_hydro/deAcase_b/a-brl"/>
</dbReference>
<dbReference type="InterPro" id="IPR005501">
    <property type="entry name" value="LamB/YcsF/PxpA-like"/>
</dbReference>
<dbReference type="NCBIfam" id="NF003813">
    <property type="entry name" value="PRK05406.1-2"/>
    <property type="match status" value="1"/>
</dbReference>
<dbReference type="NCBIfam" id="NF003814">
    <property type="entry name" value="PRK05406.1-3"/>
    <property type="match status" value="1"/>
</dbReference>
<dbReference type="NCBIfam" id="NF003816">
    <property type="entry name" value="PRK05406.1-5"/>
    <property type="match status" value="1"/>
</dbReference>
<dbReference type="PANTHER" id="PTHR30292:SF0">
    <property type="entry name" value="5-OXOPROLINASE SUBUNIT A"/>
    <property type="match status" value="1"/>
</dbReference>
<dbReference type="PANTHER" id="PTHR30292">
    <property type="entry name" value="UNCHARACTERIZED PROTEIN YBGL-RELATED"/>
    <property type="match status" value="1"/>
</dbReference>
<dbReference type="Pfam" id="PF03746">
    <property type="entry name" value="LamB_YcsF"/>
    <property type="match status" value="1"/>
</dbReference>
<dbReference type="SUPFAM" id="SSF88713">
    <property type="entry name" value="Glycoside hydrolase/deacetylase"/>
    <property type="match status" value="1"/>
</dbReference>
<keyword id="KW-0067">ATP-binding</keyword>
<keyword id="KW-0378">Hydrolase</keyword>
<keyword id="KW-0547">Nucleotide-binding</keyword>
<sequence>MRVDLNCDLGEAFGNYSFGGDHQIIPLITSANVACGFHAGDENVMNETVKLAKAHNVAVGAHPGLPDLKGFGRRNIDISNDEIYNLMIYQLGALQGFCRIHQVKINHVKPHGALYQMGAKDREIASVIAQAVYDFDPSLVLVGLANSYLISEAKNVGLITASEVFADRRYEDDGQLVSRKESDAVITDTDEALKQVLKMVKENKVISKNNKEVTLQADTICVHGDGEHALLFVSKIREILMKEGIDIQSL</sequence>
<name>PXPA_STAAW</name>
<comment type="function">
    <text evidence="1">Catalyzes the cleavage of 5-oxoproline to form L-glutamate coupled to the hydrolysis of ATP to ADP and inorganic phosphate.</text>
</comment>
<comment type="catalytic activity">
    <reaction evidence="1">
        <text>5-oxo-L-proline + ATP + 2 H2O = L-glutamate + ADP + phosphate + H(+)</text>
        <dbReference type="Rhea" id="RHEA:10348"/>
        <dbReference type="ChEBI" id="CHEBI:15377"/>
        <dbReference type="ChEBI" id="CHEBI:15378"/>
        <dbReference type="ChEBI" id="CHEBI:29985"/>
        <dbReference type="ChEBI" id="CHEBI:30616"/>
        <dbReference type="ChEBI" id="CHEBI:43474"/>
        <dbReference type="ChEBI" id="CHEBI:58402"/>
        <dbReference type="ChEBI" id="CHEBI:456216"/>
        <dbReference type="EC" id="3.5.2.9"/>
    </reaction>
</comment>
<comment type="subunit">
    <text evidence="1">Forms a complex composed of PxpA, PxpB and PxpC.</text>
</comment>
<comment type="similarity">
    <text evidence="1">Belongs to the LamB/PxpA family.</text>
</comment>
<accession>Q8NW95</accession>
<reference key="1">
    <citation type="journal article" date="2002" name="Lancet">
        <title>Genome and virulence determinants of high virulence community-acquired MRSA.</title>
        <authorList>
            <person name="Baba T."/>
            <person name="Takeuchi F."/>
            <person name="Kuroda M."/>
            <person name="Yuzawa H."/>
            <person name="Aoki K."/>
            <person name="Oguchi A."/>
            <person name="Nagai Y."/>
            <person name="Iwama N."/>
            <person name="Asano K."/>
            <person name="Naimi T."/>
            <person name="Kuroda H."/>
            <person name="Cui L."/>
            <person name="Yamamoto K."/>
            <person name="Hiramatsu K."/>
        </authorList>
    </citation>
    <scope>NUCLEOTIDE SEQUENCE [LARGE SCALE GENOMIC DNA]</scope>
    <source>
        <strain>MW2</strain>
    </source>
</reference>
<feature type="chain" id="PRO_0000185048" description="5-oxoprolinase subunit A">
    <location>
        <begin position="1"/>
        <end position="250"/>
    </location>
</feature>
<gene>
    <name evidence="1" type="primary">pxpA</name>
    <name type="ordered locus">MW1555</name>
</gene>
<protein>
    <recommendedName>
        <fullName evidence="1">5-oxoprolinase subunit A</fullName>
        <shortName evidence="1">5-OPase subunit A</shortName>
        <ecNumber evidence="1">3.5.2.9</ecNumber>
    </recommendedName>
    <alternativeName>
        <fullName evidence="1">5-oxoprolinase (ATP-hydrolyzing) subunit A</fullName>
    </alternativeName>
</protein>
<evidence type="ECO:0000255" key="1">
    <source>
        <dbReference type="HAMAP-Rule" id="MF_00691"/>
    </source>
</evidence>